<comment type="function">
    <text evidence="1">Regulatory subunit of the SLX1-SLX4 structure-specific endonuclease that resolves DNA secondary structures generated during DNA repair and recombination. Has endonuclease activity towards branched DNA substrates, introducing single-strand cuts in duplex DNA close to junctions with ss-DNA.</text>
</comment>
<comment type="subunit">
    <text evidence="1">Forms a heterodimer with SLX1.</text>
</comment>
<comment type="subcellular location">
    <subcellularLocation>
        <location evidence="1">Nucleus</location>
    </subcellularLocation>
</comment>
<comment type="PTM">
    <text evidence="1">Phosphorylated in response to DNA damage.</text>
</comment>
<comment type="similarity">
    <text evidence="1">Belongs to the SLX4 family.</text>
</comment>
<evidence type="ECO:0000255" key="1">
    <source>
        <dbReference type="HAMAP-Rule" id="MF_03110"/>
    </source>
</evidence>
<evidence type="ECO:0000256" key="2">
    <source>
        <dbReference type="SAM" id="MobiDB-lite"/>
    </source>
</evidence>
<name>SLX4_PARBA</name>
<protein>
    <recommendedName>
        <fullName evidence="1">Structure-specific endonuclease subunit SLX4</fullName>
    </recommendedName>
</protein>
<gene>
    <name evidence="1" type="primary">SLX4</name>
    <name type="ORF">PAAG_06767</name>
</gene>
<reference key="1">
    <citation type="journal article" date="2011" name="PLoS Genet.">
        <title>Comparative genomic analysis of human fungal pathogens causing paracoccidioidomycosis.</title>
        <authorList>
            <person name="Desjardins C.A."/>
            <person name="Champion M.D."/>
            <person name="Holder J.W."/>
            <person name="Muszewska A."/>
            <person name="Goldberg J."/>
            <person name="Bailao A.M."/>
            <person name="Brigido M.M."/>
            <person name="Ferreira M.E."/>
            <person name="Garcia A.M."/>
            <person name="Grynberg M."/>
            <person name="Gujja S."/>
            <person name="Heiman D.I."/>
            <person name="Henn M.R."/>
            <person name="Kodira C.D."/>
            <person name="Leon-Narvaez H."/>
            <person name="Longo L.V.G."/>
            <person name="Ma L.-J."/>
            <person name="Malavazi I."/>
            <person name="Matsuo A.L."/>
            <person name="Morais F.V."/>
            <person name="Pereira M."/>
            <person name="Rodriguez-Brito S."/>
            <person name="Sakthikumar S."/>
            <person name="Salem-Izacc S.M."/>
            <person name="Sykes S.M."/>
            <person name="Teixeira M.M."/>
            <person name="Vallejo M.C."/>
            <person name="Walter M.E."/>
            <person name="Yandava C."/>
            <person name="Young S."/>
            <person name="Zeng Q."/>
            <person name="Zucker J."/>
            <person name="Felipe M.S."/>
            <person name="Goldman G.H."/>
            <person name="Haas B.J."/>
            <person name="McEwen J.G."/>
            <person name="Nino-Vega G."/>
            <person name="Puccia R."/>
            <person name="San-Blas G."/>
            <person name="Soares C.M."/>
            <person name="Birren B.W."/>
            <person name="Cuomo C.A."/>
        </authorList>
    </citation>
    <scope>NUCLEOTIDE SEQUENCE [LARGE SCALE GENOMIC DNA]</scope>
    <source>
        <strain>ATCC MYA-826 / Pb01</strain>
    </source>
</reference>
<organism>
    <name type="scientific">Paracoccidioides lutzii (strain ATCC MYA-826 / Pb01)</name>
    <name type="common">Paracoccidioides brasiliensis</name>
    <dbReference type="NCBI Taxonomy" id="502779"/>
    <lineage>
        <taxon>Eukaryota</taxon>
        <taxon>Fungi</taxon>
        <taxon>Dikarya</taxon>
        <taxon>Ascomycota</taxon>
        <taxon>Pezizomycotina</taxon>
        <taxon>Eurotiomycetes</taxon>
        <taxon>Eurotiomycetidae</taxon>
        <taxon>Onygenales</taxon>
        <taxon>Ajellomycetaceae</taxon>
        <taxon>Paracoccidioides</taxon>
    </lineage>
</organism>
<accession>C1H7M6</accession>
<feature type="chain" id="PRO_0000388035" description="Structure-specific endonuclease subunit SLX4">
    <location>
        <begin position="1"/>
        <end position="864"/>
    </location>
</feature>
<feature type="region of interest" description="Disordered" evidence="2">
    <location>
        <begin position="1"/>
        <end position="21"/>
    </location>
</feature>
<feature type="region of interest" description="Disordered" evidence="2">
    <location>
        <begin position="49"/>
        <end position="69"/>
    </location>
</feature>
<feature type="region of interest" description="Disordered" evidence="2">
    <location>
        <begin position="91"/>
        <end position="113"/>
    </location>
</feature>
<feature type="region of interest" description="Disordered" evidence="2">
    <location>
        <begin position="161"/>
        <end position="190"/>
    </location>
</feature>
<feature type="region of interest" description="Disordered" evidence="2">
    <location>
        <begin position="289"/>
        <end position="318"/>
    </location>
</feature>
<feature type="region of interest" description="Disordered" evidence="2">
    <location>
        <begin position="346"/>
        <end position="385"/>
    </location>
</feature>
<feature type="region of interest" description="Disordered" evidence="2">
    <location>
        <begin position="413"/>
        <end position="433"/>
    </location>
</feature>
<feature type="region of interest" description="Disordered" evidence="2">
    <location>
        <begin position="625"/>
        <end position="767"/>
    </location>
</feature>
<feature type="compositionally biased region" description="Polar residues" evidence="2">
    <location>
        <begin position="295"/>
        <end position="306"/>
    </location>
</feature>
<feature type="compositionally biased region" description="Basic residues" evidence="2">
    <location>
        <begin position="307"/>
        <end position="318"/>
    </location>
</feature>
<feature type="compositionally biased region" description="Polar residues" evidence="2">
    <location>
        <begin position="656"/>
        <end position="668"/>
    </location>
</feature>
<feature type="compositionally biased region" description="Low complexity" evidence="2">
    <location>
        <begin position="685"/>
        <end position="695"/>
    </location>
</feature>
<feature type="compositionally biased region" description="Polar residues" evidence="2">
    <location>
        <begin position="743"/>
        <end position="767"/>
    </location>
</feature>
<keyword id="KW-0227">DNA damage</keyword>
<keyword id="KW-0233">DNA recombination</keyword>
<keyword id="KW-0234">DNA repair</keyword>
<keyword id="KW-0539">Nucleus</keyword>
<keyword id="KW-0597">Phosphoprotein</keyword>
<keyword id="KW-1185">Reference proteome</keyword>
<sequence>MTTQSSSDGRMFTSSIIPVIPDSSPTAAEVIELSSQLSLPSPTSLLDFLSTSTSRGPTRSDTVGDKTQGKEVLDTRPILENSFRRENRVVTGTGGKAATGKRLKRRTESPGNACQSKIHIVSGEQIILGQSRPEKKAAKTKRTKKEDGLINYKLHGRVSKANQTVSRQPETKISAPKECNDTTQPAGNDHINDLDDGLQLEQATQRRFDWTPTKDTTIPVIDLVGDSPSSCEKSLSGMRSTRTMLSNYEFSGVVGTLGGSRSEGTPDAPTTKRPIELLKVNNFKEISGLSDDRQSSITEDSESATSKPRRVKAKNRPKSKLTTITSYATAKYTVVEKSVNLDPVETLLSDEPGKEKSAAKRTSGARCAKPGRKKSTTTEKKNEPPIFKVVHPLEAFKAFGGQELLFGTSSQLANGHSEDQHEQNEGTSHISNSSAFLPLSRSESSSKALSQASLGSGFLKLSSSKNLWSAGARDLTGAVLEIDEIDLSEHRMKPSIFAFQPKAPLGCKADTQIPPQLGEIDSDNSCQKPLAAIDPPEFVTRSETPSEKGVLHKYIVKPTHTNSCSQSGSSISVGSPEKPVQDKPIFNGFTTSELAKKVAAYGFKPIKSRDKMISLLEKCWENRNKAPNSVPKLTPGDGLSKVDEPTKGQSLGPHLQPNSISQKATTQVPKVKPAKRATKSQGVPVSSRRSTSTSKVSRKRTVSPSAILVDDDQTSDSTGDSVPPSRPRQPSKSCTPRDRENTPESFNLPTTPLTIRSGKVPSTVTSSESLPSLYTQITAAIKAQPRLRAFNGVKQPTWYEKILMYDPIQLEDLAVWLNTDGFERIGEDREVWPGLLREWCESKGVCCIWRKQRGARAHCPLVRA</sequence>
<dbReference type="EMBL" id="KN294011">
    <property type="protein sequence ID" value="EEH36349.2"/>
    <property type="molecule type" value="Genomic_DNA"/>
</dbReference>
<dbReference type="RefSeq" id="XP_002791221.2">
    <property type="nucleotide sequence ID" value="XM_002791175.2"/>
</dbReference>
<dbReference type="SMR" id="C1H7M6"/>
<dbReference type="STRING" id="502779.C1H7M6"/>
<dbReference type="GeneID" id="9094473"/>
<dbReference type="KEGG" id="pbl:PAAG_06767"/>
<dbReference type="VEuPathDB" id="FungiDB:PAAG_06767"/>
<dbReference type="eggNOG" id="ENOG502SEB3">
    <property type="taxonomic scope" value="Eukaryota"/>
</dbReference>
<dbReference type="HOGENOM" id="CLU_016773_0_0_1"/>
<dbReference type="OMA" id="SICCLWK"/>
<dbReference type="OrthoDB" id="5349119at2759"/>
<dbReference type="Proteomes" id="UP000002059">
    <property type="component" value="Partially assembled WGS sequence"/>
</dbReference>
<dbReference type="GO" id="GO:0033557">
    <property type="term" value="C:Slx1-Slx4 complex"/>
    <property type="evidence" value="ECO:0007669"/>
    <property type="project" value="UniProtKB-UniRule"/>
</dbReference>
<dbReference type="GO" id="GO:0017108">
    <property type="term" value="F:5'-flap endonuclease activity"/>
    <property type="evidence" value="ECO:0007669"/>
    <property type="project" value="InterPro"/>
</dbReference>
<dbReference type="GO" id="GO:0006310">
    <property type="term" value="P:DNA recombination"/>
    <property type="evidence" value="ECO:0007669"/>
    <property type="project" value="UniProtKB-UniRule"/>
</dbReference>
<dbReference type="GO" id="GO:0006281">
    <property type="term" value="P:DNA repair"/>
    <property type="evidence" value="ECO:0007669"/>
    <property type="project" value="UniProtKB-UniRule"/>
</dbReference>
<dbReference type="GO" id="GO:0006260">
    <property type="term" value="P:DNA replication"/>
    <property type="evidence" value="ECO:0007669"/>
    <property type="project" value="InterPro"/>
</dbReference>
<dbReference type="CDD" id="cd22999">
    <property type="entry name" value="SAP_SLX4"/>
    <property type="match status" value="1"/>
</dbReference>
<dbReference type="HAMAP" id="MF_03110">
    <property type="entry name" value="Endonuc_su_Slx4"/>
    <property type="match status" value="1"/>
</dbReference>
<dbReference type="InterPro" id="IPR027784">
    <property type="entry name" value="Slx4_ascomycetes"/>
</dbReference>
<dbReference type="InterPro" id="IPR018574">
    <property type="entry name" value="Structure-sp_endonuc_su_Slx4"/>
</dbReference>
<dbReference type="Pfam" id="PF09494">
    <property type="entry name" value="Slx4"/>
    <property type="match status" value="1"/>
</dbReference>
<proteinExistence type="inferred from homology"/>